<gene>
    <name evidence="1" type="primary">hutH</name>
    <name type="ordered locus">Ssed_4446</name>
</gene>
<evidence type="ECO:0000255" key="1">
    <source>
        <dbReference type="HAMAP-Rule" id="MF_00229"/>
    </source>
</evidence>
<sequence length="510" mass="53963">MSHLILNPGTLTLSQIREISRGKVSLELADSAINDINTSAGLVQQVLDEGRTVYGINTGFGLLANTKIAADDLQLLQRSIVLSHAAGTGQYMQDATVRLMMVLKINSLSRGFSGIRLEVINFLIALVNAEVYPCVPEKGSVGASGDLAPLAHMCLPLLGEGEMSYKGQILSAKEGLEIAGLKPIELAAKEGLALLNGTQASTALALEGLFNAEDLFAASSVIGAMSVEAAMGSRSPFDSRIHAARGQKGQIDSAALFRLLLGDESEISLSHVDCERVQDPYSLRCQPQVLGACLTQIRHAAEVLGTEANGVTDNPLVFQDTGDIISGGNFHAEPVAMAADNLAIALAELGSIAERRIALLIDPNLSMLPPFLVENGGVNSGFMIAQVTAAALASENKTYAHPASVDSLPTSANQEDHVSMATFAARRLRDMTENTRGVLAIELLASAQGLDFRAPLQPSVVVAKAKAEIRELVTYYDKDRFFGPDIEAATDLLITASFNAYLPDGILPSL</sequence>
<dbReference type="EC" id="4.3.1.3" evidence="1"/>
<dbReference type="EMBL" id="CP000821">
    <property type="protein sequence ID" value="ABV39048.1"/>
    <property type="molecule type" value="Genomic_DNA"/>
</dbReference>
<dbReference type="RefSeq" id="WP_012144775.1">
    <property type="nucleotide sequence ID" value="NC_009831.1"/>
</dbReference>
<dbReference type="SMR" id="A8G1S5"/>
<dbReference type="STRING" id="425104.Ssed_4446"/>
<dbReference type="KEGG" id="sse:Ssed_4446"/>
<dbReference type="eggNOG" id="COG2986">
    <property type="taxonomic scope" value="Bacteria"/>
</dbReference>
<dbReference type="HOGENOM" id="CLU_014801_4_0_6"/>
<dbReference type="OrthoDB" id="9806955at2"/>
<dbReference type="UniPathway" id="UPA00379">
    <property type="reaction ID" value="UER00549"/>
</dbReference>
<dbReference type="Proteomes" id="UP000002015">
    <property type="component" value="Chromosome"/>
</dbReference>
<dbReference type="GO" id="GO:0005737">
    <property type="term" value="C:cytoplasm"/>
    <property type="evidence" value="ECO:0007669"/>
    <property type="project" value="UniProtKB-SubCell"/>
</dbReference>
<dbReference type="GO" id="GO:0004397">
    <property type="term" value="F:histidine ammonia-lyase activity"/>
    <property type="evidence" value="ECO:0007669"/>
    <property type="project" value="UniProtKB-UniRule"/>
</dbReference>
<dbReference type="GO" id="GO:0019556">
    <property type="term" value="P:L-histidine catabolic process to glutamate and formamide"/>
    <property type="evidence" value="ECO:0007669"/>
    <property type="project" value="UniProtKB-UniPathway"/>
</dbReference>
<dbReference type="GO" id="GO:0019557">
    <property type="term" value="P:L-histidine catabolic process to glutamate and formate"/>
    <property type="evidence" value="ECO:0007669"/>
    <property type="project" value="UniProtKB-UniPathway"/>
</dbReference>
<dbReference type="CDD" id="cd00332">
    <property type="entry name" value="PAL-HAL"/>
    <property type="match status" value="1"/>
</dbReference>
<dbReference type="FunFam" id="1.10.275.10:FF:000005">
    <property type="entry name" value="Histidine ammonia-lyase"/>
    <property type="match status" value="1"/>
</dbReference>
<dbReference type="FunFam" id="1.20.200.10:FF:000003">
    <property type="entry name" value="Histidine ammonia-lyase"/>
    <property type="match status" value="1"/>
</dbReference>
<dbReference type="Gene3D" id="1.20.200.10">
    <property type="entry name" value="Fumarase/aspartase (Central domain)"/>
    <property type="match status" value="1"/>
</dbReference>
<dbReference type="Gene3D" id="1.10.275.10">
    <property type="entry name" value="Fumarase/aspartase (N-terminal domain)"/>
    <property type="match status" value="1"/>
</dbReference>
<dbReference type="HAMAP" id="MF_00229">
    <property type="entry name" value="His_ammonia_lyase"/>
    <property type="match status" value="1"/>
</dbReference>
<dbReference type="InterPro" id="IPR001106">
    <property type="entry name" value="Aromatic_Lyase"/>
</dbReference>
<dbReference type="InterPro" id="IPR024083">
    <property type="entry name" value="Fumarase/histidase_N"/>
</dbReference>
<dbReference type="InterPro" id="IPR005921">
    <property type="entry name" value="HutH"/>
</dbReference>
<dbReference type="InterPro" id="IPR008948">
    <property type="entry name" value="L-Aspartase-like"/>
</dbReference>
<dbReference type="InterPro" id="IPR022313">
    <property type="entry name" value="Phe/His_NH3-lyase_AS"/>
</dbReference>
<dbReference type="NCBIfam" id="TIGR01225">
    <property type="entry name" value="hutH"/>
    <property type="match status" value="1"/>
</dbReference>
<dbReference type="NCBIfam" id="NF006871">
    <property type="entry name" value="PRK09367.1"/>
    <property type="match status" value="1"/>
</dbReference>
<dbReference type="PANTHER" id="PTHR10362">
    <property type="entry name" value="HISTIDINE AMMONIA-LYASE"/>
    <property type="match status" value="1"/>
</dbReference>
<dbReference type="Pfam" id="PF00221">
    <property type="entry name" value="Lyase_aromatic"/>
    <property type="match status" value="1"/>
</dbReference>
<dbReference type="SUPFAM" id="SSF48557">
    <property type="entry name" value="L-aspartase-like"/>
    <property type="match status" value="1"/>
</dbReference>
<dbReference type="PROSITE" id="PS00488">
    <property type="entry name" value="PAL_HISTIDASE"/>
    <property type="match status" value="1"/>
</dbReference>
<proteinExistence type="inferred from homology"/>
<organism>
    <name type="scientific">Shewanella sediminis (strain HAW-EB3)</name>
    <dbReference type="NCBI Taxonomy" id="425104"/>
    <lineage>
        <taxon>Bacteria</taxon>
        <taxon>Pseudomonadati</taxon>
        <taxon>Pseudomonadota</taxon>
        <taxon>Gammaproteobacteria</taxon>
        <taxon>Alteromonadales</taxon>
        <taxon>Shewanellaceae</taxon>
        <taxon>Shewanella</taxon>
    </lineage>
</organism>
<reference key="1">
    <citation type="submission" date="2007-08" db="EMBL/GenBank/DDBJ databases">
        <title>Complete sequence of Shewanella sediminis HAW-EB3.</title>
        <authorList>
            <consortium name="US DOE Joint Genome Institute"/>
            <person name="Copeland A."/>
            <person name="Lucas S."/>
            <person name="Lapidus A."/>
            <person name="Barry K."/>
            <person name="Glavina del Rio T."/>
            <person name="Dalin E."/>
            <person name="Tice H."/>
            <person name="Pitluck S."/>
            <person name="Chertkov O."/>
            <person name="Brettin T."/>
            <person name="Bruce D."/>
            <person name="Detter J.C."/>
            <person name="Han C."/>
            <person name="Schmutz J."/>
            <person name="Larimer F."/>
            <person name="Land M."/>
            <person name="Hauser L."/>
            <person name="Kyrpides N."/>
            <person name="Kim E."/>
            <person name="Zhao J.-S."/>
            <person name="Richardson P."/>
        </authorList>
    </citation>
    <scope>NUCLEOTIDE SEQUENCE [LARGE SCALE GENOMIC DNA]</scope>
    <source>
        <strain>HAW-EB3</strain>
    </source>
</reference>
<accession>A8G1S5</accession>
<comment type="catalytic activity">
    <reaction evidence="1">
        <text>L-histidine = trans-urocanate + NH4(+)</text>
        <dbReference type="Rhea" id="RHEA:21232"/>
        <dbReference type="ChEBI" id="CHEBI:17771"/>
        <dbReference type="ChEBI" id="CHEBI:28938"/>
        <dbReference type="ChEBI" id="CHEBI:57595"/>
        <dbReference type="EC" id="4.3.1.3"/>
    </reaction>
</comment>
<comment type="pathway">
    <text evidence="1">Amino-acid degradation; L-histidine degradation into L-glutamate; N-formimidoyl-L-glutamate from L-histidine: step 1/3.</text>
</comment>
<comment type="subcellular location">
    <subcellularLocation>
        <location evidence="1">Cytoplasm</location>
    </subcellularLocation>
</comment>
<comment type="PTM">
    <text evidence="1">Contains an active site 4-methylidene-imidazol-5-one (MIO), which is formed autocatalytically by cyclization and dehydration of residues Ala-Ser-Gly.</text>
</comment>
<comment type="similarity">
    <text evidence="1">Belongs to the PAL/histidase family.</text>
</comment>
<protein>
    <recommendedName>
        <fullName evidence="1">Histidine ammonia-lyase</fullName>
        <shortName evidence="1">Histidase</shortName>
        <ecNumber evidence="1">4.3.1.3</ecNumber>
    </recommendedName>
</protein>
<keyword id="KW-0963">Cytoplasm</keyword>
<keyword id="KW-0369">Histidine metabolism</keyword>
<keyword id="KW-0456">Lyase</keyword>
<keyword id="KW-1185">Reference proteome</keyword>
<name>HUTH_SHESH</name>
<feature type="chain" id="PRO_1000078230" description="Histidine ammonia-lyase">
    <location>
        <begin position="1"/>
        <end position="510"/>
    </location>
</feature>
<feature type="modified residue" description="2,3-didehydroalanine (Ser)" evidence="1">
    <location>
        <position position="144"/>
    </location>
</feature>
<feature type="cross-link" description="5-imidazolinone (Ala-Gly)" evidence="1">
    <location>
        <begin position="143"/>
        <end position="145"/>
    </location>
</feature>